<gene>
    <name evidence="1" type="primary">uvrB</name>
    <name type="ordered locus">LBJ_2353</name>
</gene>
<evidence type="ECO:0000255" key="1">
    <source>
        <dbReference type="HAMAP-Rule" id="MF_00204"/>
    </source>
</evidence>
<sequence>MASIFKIHSAYKPAGDQIKAIENIADSFQKGAEKVTLVGVTGSGKTFTMAQVIQNLGLPTLVLSHNKTLAAQLFREFKEFFPENAVEYFVSYYDYYQPEAYVPSSDTFIEKDSSINEEIDKLRLRATSSLLEREDVVIVSSVSCIYGLGSPEEYTNSVVALKTGDTIERDAVIRKLLHIQYNRNDIDFSRGNFRVRGDSIEIYPAYHTDGIRIEFFGDEIDSISRINPITAQTILKLEKTYIYPAKHFITSGPKVKVAIENIKAELEAQALFFRKNDKLLEAERIISRTNYDMEMLQEMGYCNGIENYSRHLTGRKAGERPACLIDYFQGEFLLIVDESHVTIPQIGGMFAGDKARKQTLVDFGFRLPSALDNRPLNFEEFETLTPKTLYVSATPADYEMEKSSKVVEQIIRPTGLLDPIVEVRSTKNQIEDLLVEIRKRIDVGERILITTLTKKMSEDLTDYYKEIGLQVAYLHSEVETLDRVAIIRDLRKGIYDVLIGINLLREGLDIPEVSLVAILDADKEGFLRNYKSLIQTVGRAARNVNGTAILYADKITDSMAKAIDETKRRRKIQEDHNLKFGITPLTIRKEVNDIIEREEKKRTSEDLVLEDVEKKFNSKKFPNKEVLKDKLREEMMKAAKELDFERAAILRDKMLSIQINDPSTEN</sequence>
<dbReference type="EMBL" id="CP000350">
    <property type="protein sequence ID" value="ABJ76821.1"/>
    <property type="molecule type" value="Genomic_DNA"/>
</dbReference>
<dbReference type="RefSeq" id="WP_011669628.1">
    <property type="nucleotide sequence ID" value="NC_008510.1"/>
</dbReference>
<dbReference type="SMR" id="Q04QJ9"/>
<dbReference type="KEGG" id="lbj:LBJ_2353"/>
<dbReference type="HOGENOM" id="CLU_009621_2_1_12"/>
<dbReference type="Proteomes" id="UP000000656">
    <property type="component" value="Chromosome 1"/>
</dbReference>
<dbReference type="GO" id="GO:0005737">
    <property type="term" value="C:cytoplasm"/>
    <property type="evidence" value="ECO:0007669"/>
    <property type="project" value="UniProtKB-SubCell"/>
</dbReference>
<dbReference type="GO" id="GO:0009380">
    <property type="term" value="C:excinuclease repair complex"/>
    <property type="evidence" value="ECO:0007669"/>
    <property type="project" value="InterPro"/>
</dbReference>
<dbReference type="GO" id="GO:0005524">
    <property type="term" value="F:ATP binding"/>
    <property type="evidence" value="ECO:0007669"/>
    <property type="project" value="UniProtKB-UniRule"/>
</dbReference>
<dbReference type="GO" id="GO:0016887">
    <property type="term" value="F:ATP hydrolysis activity"/>
    <property type="evidence" value="ECO:0007669"/>
    <property type="project" value="InterPro"/>
</dbReference>
<dbReference type="GO" id="GO:0003677">
    <property type="term" value="F:DNA binding"/>
    <property type="evidence" value="ECO:0007669"/>
    <property type="project" value="UniProtKB-UniRule"/>
</dbReference>
<dbReference type="GO" id="GO:0009381">
    <property type="term" value="F:excinuclease ABC activity"/>
    <property type="evidence" value="ECO:0007669"/>
    <property type="project" value="UniProtKB-UniRule"/>
</dbReference>
<dbReference type="GO" id="GO:0004386">
    <property type="term" value="F:helicase activity"/>
    <property type="evidence" value="ECO:0007669"/>
    <property type="project" value="UniProtKB-KW"/>
</dbReference>
<dbReference type="GO" id="GO:0006289">
    <property type="term" value="P:nucleotide-excision repair"/>
    <property type="evidence" value="ECO:0007669"/>
    <property type="project" value="UniProtKB-UniRule"/>
</dbReference>
<dbReference type="GO" id="GO:0009432">
    <property type="term" value="P:SOS response"/>
    <property type="evidence" value="ECO:0007669"/>
    <property type="project" value="UniProtKB-UniRule"/>
</dbReference>
<dbReference type="CDD" id="cd17916">
    <property type="entry name" value="DEXHc_UvrB"/>
    <property type="match status" value="1"/>
</dbReference>
<dbReference type="CDD" id="cd18790">
    <property type="entry name" value="SF2_C_UvrB"/>
    <property type="match status" value="1"/>
</dbReference>
<dbReference type="Gene3D" id="3.40.50.300">
    <property type="entry name" value="P-loop containing nucleotide triphosphate hydrolases"/>
    <property type="match status" value="3"/>
</dbReference>
<dbReference type="Gene3D" id="4.10.860.10">
    <property type="entry name" value="UVR domain"/>
    <property type="match status" value="1"/>
</dbReference>
<dbReference type="HAMAP" id="MF_00204">
    <property type="entry name" value="UvrB"/>
    <property type="match status" value="1"/>
</dbReference>
<dbReference type="InterPro" id="IPR006935">
    <property type="entry name" value="Helicase/UvrB_N"/>
</dbReference>
<dbReference type="InterPro" id="IPR014001">
    <property type="entry name" value="Helicase_ATP-bd"/>
</dbReference>
<dbReference type="InterPro" id="IPR001650">
    <property type="entry name" value="Helicase_C-like"/>
</dbReference>
<dbReference type="InterPro" id="IPR027417">
    <property type="entry name" value="P-loop_NTPase"/>
</dbReference>
<dbReference type="InterPro" id="IPR001943">
    <property type="entry name" value="UVR_dom"/>
</dbReference>
<dbReference type="InterPro" id="IPR036876">
    <property type="entry name" value="UVR_dom_sf"/>
</dbReference>
<dbReference type="InterPro" id="IPR004807">
    <property type="entry name" value="UvrB"/>
</dbReference>
<dbReference type="InterPro" id="IPR041471">
    <property type="entry name" value="UvrB_inter"/>
</dbReference>
<dbReference type="InterPro" id="IPR024759">
    <property type="entry name" value="UvrB_YAD/RRR_dom"/>
</dbReference>
<dbReference type="NCBIfam" id="NF003673">
    <property type="entry name" value="PRK05298.1"/>
    <property type="match status" value="1"/>
</dbReference>
<dbReference type="NCBIfam" id="TIGR00631">
    <property type="entry name" value="uvrb"/>
    <property type="match status" value="1"/>
</dbReference>
<dbReference type="PANTHER" id="PTHR24029">
    <property type="entry name" value="UVRABC SYSTEM PROTEIN B"/>
    <property type="match status" value="1"/>
</dbReference>
<dbReference type="PANTHER" id="PTHR24029:SF0">
    <property type="entry name" value="UVRABC SYSTEM PROTEIN B"/>
    <property type="match status" value="1"/>
</dbReference>
<dbReference type="Pfam" id="PF00271">
    <property type="entry name" value="Helicase_C"/>
    <property type="match status" value="1"/>
</dbReference>
<dbReference type="Pfam" id="PF04851">
    <property type="entry name" value="ResIII"/>
    <property type="match status" value="1"/>
</dbReference>
<dbReference type="Pfam" id="PF02151">
    <property type="entry name" value="UVR"/>
    <property type="match status" value="1"/>
</dbReference>
<dbReference type="Pfam" id="PF12344">
    <property type="entry name" value="UvrB"/>
    <property type="match status" value="1"/>
</dbReference>
<dbReference type="Pfam" id="PF17757">
    <property type="entry name" value="UvrB_inter"/>
    <property type="match status" value="1"/>
</dbReference>
<dbReference type="SMART" id="SM00487">
    <property type="entry name" value="DEXDc"/>
    <property type="match status" value="1"/>
</dbReference>
<dbReference type="SMART" id="SM00490">
    <property type="entry name" value="HELICc"/>
    <property type="match status" value="1"/>
</dbReference>
<dbReference type="SUPFAM" id="SSF46600">
    <property type="entry name" value="C-terminal UvrC-binding domain of UvrB"/>
    <property type="match status" value="1"/>
</dbReference>
<dbReference type="SUPFAM" id="SSF52540">
    <property type="entry name" value="P-loop containing nucleoside triphosphate hydrolases"/>
    <property type="match status" value="2"/>
</dbReference>
<dbReference type="PROSITE" id="PS51192">
    <property type="entry name" value="HELICASE_ATP_BIND_1"/>
    <property type="match status" value="1"/>
</dbReference>
<dbReference type="PROSITE" id="PS51194">
    <property type="entry name" value="HELICASE_CTER"/>
    <property type="match status" value="1"/>
</dbReference>
<dbReference type="PROSITE" id="PS50151">
    <property type="entry name" value="UVR"/>
    <property type="match status" value="1"/>
</dbReference>
<keyword id="KW-0067">ATP-binding</keyword>
<keyword id="KW-0963">Cytoplasm</keyword>
<keyword id="KW-0227">DNA damage</keyword>
<keyword id="KW-0228">DNA excision</keyword>
<keyword id="KW-0234">DNA repair</keyword>
<keyword id="KW-0267">Excision nuclease</keyword>
<keyword id="KW-0347">Helicase</keyword>
<keyword id="KW-0378">Hydrolase</keyword>
<keyword id="KW-0547">Nucleotide-binding</keyword>
<keyword id="KW-0742">SOS response</keyword>
<organism>
    <name type="scientific">Leptospira borgpetersenii serovar Hardjo-bovis (strain JB197)</name>
    <dbReference type="NCBI Taxonomy" id="355277"/>
    <lineage>
        <taxon>Bacteria</taxon>
        <taxon>Pseudomonadati</taxon>
        <taxon>Spirochaetota</taxon>
        <taxon>Spirochaetia</taxon>
        <taxon>Leptospirales</taxon>
        <taxon>Leptospiraceae</taxon>
        <taxon>Leptospira</taxon>
    </lineage>
</organism>
<reference key="1">
    <citation type="journal article" date="2006" name="Proc. Natl. Acad. Sci. U.S.A.">
        <title>Genome reduction in Leptospira borgpetersenii reflects limited transmission potential.</title>
        <authorList>
            <person name="Bulach D.M."/>
            <person name="Zuerner R.L."/>
            <person name="Wilson P."/>
            <person name="Seemann T."/>
            <person name="McGrath A."/>
            <person name="Cullen P.A."/>
            <person name="Davis J."/>
            <person name="Johnson M."/>
            <person name="Kuczek E."/>
            <person name="Alt D.P."/>
            <person name="Peterson-Burch B."/>
            <person name="Coppel R.L."/>
            <person name="Rood J.I."/>
            <person name="Davies J.K."/>
            <person name="Adler B."/>
        </authorList>
    </citation>
    <scope>NUCLEOTIDE SEQUENCE [LARGE SCALE GENOMIC DNA]</scope>
    <source>
        <strain>JB197</strain>
    </source>
</reference>
<protein>
    <recommendedName>
        <fullName evidence="1">UvrABC system protein B</fullName>
        <shortName evidence="1">Protein UvrB</shortName>
    </recommendedName>
    <alternativeName>
        <fullName evidence="1">Excinuclease ABC subunit B</fullName>
    </alternativeName>
</protein>
<feature type="chain" id="PRO_1000077902" description="UvrABC system protein B">
    <location>
        <begin position="1"/>
        <end position="666"/>
    </location>
</feature>
<feature type="domain" description="Helicase ATP-binding" evidence="1">
    <location>
        <begin position="26"/>
        <end position="183"/>
    </location>
</feature>
<feature type="domain" description="Helicase C-terminal" evidence="1">
    <location>
        <begin position="429"/>
        <end position="591"/>
    </location>
</feature>
<feature type="domain" description="UVR" evidence="1">
    <location>
        <begin position="625"/>
        <end position="660"/>
    </location>
</feature>
<feature type="short sequence motif" description="Beta-hairpin">
    <location>
        <begin position="92"/>
        <end position="115"/>
    </location>
</feature>
<feature type="binding site" evidence="1">
    <location>
        <begin position="39"/>
        <end position="46"/>
    </location>
    <ligand>
        <name>ATP</name>
        <dbReference type="ChEBI" id="CHEBI:30616"/>
    </ligand>
</feature>
<comment type="function">
    <text evidence="1">The UvrABC repair system catalyzes the recognition and processing of DNA lesions. A damage recognition complex composed of 2 UvrA and 2 UvrB subunits scans DNA for abnormalities. Upon binding of the UvrA(2)B(2) complex to a putative damaged site, the DNA wraps around one UvrB monomer. DNA wrap is dependent on ATP binding by UvrB and probably causes local melting of the DNA helix, facilitating insertion of UvrB beta-hairpin between the DNA strands. Then UvrB probes one DNA strand for the presence of a lesion. If a lesion is found the UvrA subunits dissociate and the UvrB-DNA preincision complex is formed. This complex is subsequently bound by UvrC and the second UvrB is released. If no lesion is found, the DNA wraps around the other UvrB subunit that will check the other stand for damage.</text>
</comment>
<comment type="subunit">
    <text evidence="1">Forms a heterotetramer with UvrA during the search for lesions. Interacts with UvrC in an incision complex.</text>
</comment>
<comment type="subcellular location">
    <subcellularLocation>
        <location evidence="1">Cytoplasm</location>
    </subcellularLocation>
</comment>
<comment type="domain">
    <text evidence="1">The beta-hairpin motif is involved in DNA binding.</text>
</comment>
<comment type="similarity">
    <text evidence="1">Belongs to the UvrB family.</text>
</comment>
<accession>Q04QJ9</accession>
<proteinExistence type="inferred from homology"/>
<name>UVRB_LEPBJ</name>